<feature type="chain" id="PRO_0000312226" description="Acidic amino acid decarboxylase GADL1">
    <location>
        <begin position="1" status="less than"/>
        <end position="511"/>
    </location>
</feature>
<feature type="modified residue" description="N6-(pyridoxal phosphate)lysine" evidence="1">
    <location>
        <position position="323"/>
    </location>
</feature>
<feature type="non-terminal residue">
    <location>
        <position position="1"/>
    </location>
</feature>
<name>GADL1_XENTR</name>
<protein>
    <recommendedName>
        <fullName>Acidic amino acid decarboxylase GADL1</fullName>
    </recommendedName>
    <alternativeName>
        <fullName>Aspartate 1-decarboxylase</fullName>
        <shortName>ADC</shortName>
        <ecNumber evidence="1">4.1.1.11</ecNumber>
    </alternativeName>
    <alternativeName>
        <fullName>Cysteine sulfinic acid decarboxylase</fullName>
        <shortName>CSADC</shortName>
        <ecNumber evidence="1">4.1.1.29</ecNumber>
    </alternativeName>
    <alternativeName>
        <fullName>Glutamate decarboxylase-like protein 1</fullName>
    </alternativeName>
</protein>
<gene>
    <name type="primary">gadl1</name>
    <name type="ORF">TGas121d14.1</name>
</gene>
<proteinExistence type="evidence at transcript level"/>
<keyword id="KW-0210">Decarboxylase</keyword>
<keyword id="KW-0456">Lyase</keyword>
<keyword id="KW-0663">Pyridoxal phosphate</keyword>
<keyword id="KW-1185">Reference proteome</keyword>
<accession>Q28D99</accession>
<reference key="1">
    <citation type="submission" date="2006-10" db="EMBL/GenBank/DDBJ databases">
        <authorList>
            <consortium name="Sanger Xenopus tropicalis EST/cDNA project"/>
        </authorList>
    </citation>
    <scope>NUCLEOTIDE SEQUENCE [LARGE SCALE MRNA]</scope>
    <source>
        <tissue>Gastrula</tissue>
    </source>
</reference>
<organism>
    <name type="scientific">Xenopus tropicalis</name>
    <name type="common">Western clawed frog</name>
    <name type="synonym">Silurana tropicalis</name>
    <dbReference type="NCBI Taxonomy" id="8364"/>
    <lineage>
        <taxon>Eukaryota</taxon>
        <taxon>Metazoa</taxon>
        <taxon>Chordata</taxon>
        <taxon>Craniata</taxon>
        <taxon>Vertebrata</taxon>
        <taxon>Euteleostomi</taxon>
        <taxon>Amphibia</taxon>
        <taxon>Batrachia</taxon>
        <taxon>Anura</taxon>
        <taxon>Pipoidea</taxon>
        <taxon>Pipidae</taxon>
        <taxon>Xenopodinae</taxon>
        <taxon>Xenopus</taxon>
        <taxon>Silurana</taxon>
    </lineage>
</organism>
<evidence type="ECO:0000250" key="1">
    <source>
        <dbReference type="UniProtKB" id="Q80WP8"/>
    </source>
</evidence>
<evidence type="ECO:0000305" key="2"/>
<dbReference type="EC" id="4.1.1.11" evidence="1"/>
<dbReference type="EC" id="4.1.1.29" evidence="1"/>
<dbReference type="EMBL" id="CR855620">
    <property type="protein sequence ID" value="CAJ83832.1"/>
    <property type="status" value="ALT_INIT"/>
    <property type="molecule type" value="mRNA"/>
</dbReference>
<dbReference type="RefSeq" id="NP_001039075.1">
    <property type="nucleotide sequence ID" value="NM_001045610.1"/>
</dbReference>
<dbReference type="SMR" id="Q28D99"/>
<dbReference type="FunCoup" id="Q28D99">
    <property type="interactions" value="549"/>
</dbReference>
<dbReference type="STRING" id="8364.ENSXETP00000017632"/>
<dbReference type="PaxDb" id="8364-ENSXETP00000031701"/>
<dbReference type="GeneID" id="733871"/>
<dbReference type="KEGG" id="xtr:733871"/>
<dbReference type="CTD" id="339896"/>
<dbReference type="eggNOG" id="KOG0629">
    <property type="taxonomic scope" value="Eukaryota"/>
</dbReference>
<dbReference type="InParanoid" id="Q28D99"/>
<dbReference type="OrthoDB" id="392571at2759"/>
<dbReference type="Reactome" id="R-XTR-1614558">
    <property type="pathway name" value="Degradation of cysteine and homocysteine"/>
</dbReference>
<dbReference type="Reactome" id="R-XTR-8963693">
    <property type="pathway name" value="Aspartate and asparagine metabolism"/>
</dbReference>
<dbReference type="Proteomes" id="UP000008143">
    <property type="component" value="Chromosome 6"/>
</dbReference>
<dbReference type="GO" id="GO:0004068">
    <property type="term" value="F:aspartate 1-decarboxylase activity"/>
    <property type="evidence" value="ECO:0007669"/>
    <property type="project" value="UniProtKB-EC"/>
</dbReference>
<dbReference type="GO" id="GO:0030170">
    <property type="term" value="F:pyridoxal phosphate binding"/>
    <property type="evidence" value="ECO:0007669"/>
    <property type="project" value="InterPro"/>
</dbReference>
<dbReference type="GO" id="GO:0004782">
    <property type="term" value="F:sulfinoalanine decarboxylase activity"/>
    <property type="evidence" value="ECO:0007669"/>
    <property type="project" value="UniProtKB-EC"/>
</dbReference>
<dbReference type="GO" id="GO:0019752">
    <property type="term" value="P:carboxylic acid metabolic process"/>
    <property type="evidence" value="ECO:0007669"/>
    <property type="project" value="InterPro"/>
</dbReference>
<dbReference type="CDD" id="cd06450">
    <property type="entry name" value="DOPA_deC_like"/>
    <property type="match status" value="1"/>
</dbReference>
<dbReference type="FunFam" id="3.40.640.10:FF:000016">
    <property type="entry name" value="Glutamate decarboxylase like 1"/>
    <property type="match status" value="1"/>
</dbReference>
<dbReference type="Gene3D" id="3.90.1150.170">
    <property type="match status" value="1"/>
</dbReference>
<dbReference type="Gene3D" id="3.40.640.10">
    <property type="entry name" value="Type I PLP-dependent aspartate aminotransferase-like (Major domain)"/>
    <property type="match status" value="1"/>
</dbReference>
<dbReference type="InterPro" id="IPR002129">
    <property type="entry name" value="PyrdxlP-dep_de-COase"/>
</dbReference>
<dbReference type="InterPro" id="IPR015424">
    <property type="entry name" value="PyrdxlP-dep_Trfase"/>
</dbReference>
<dbReference type="InterPro" id="IPR015421">
    <property type="entry name" value="PyrdxlP-dep_Trfase_major"/>
</dbReference>
<dbReference type="InterPro" id="IPR021115">
    <property type="entry name" value="Pyridoxal-P_BS"/>
</dbReference>
<dbReference type="PANTHER" id="PTHR45677:SF1">
    <property type="entry name" value="ACIDIC AMINO ACID DECARBOXYLASE GADL1"/>
    <property type="match status" value="1"/>
</dbReference>
<dbReference type="PANTHER" id="PTHR45677">
    <property type="entry name" value="GLUTAMATE DECARBOXYLASE-RELATED"/>
    <property type="match status" value="1"/>
</dbReference>
<dbReference type="Pfam" id="PF00282">
    <property type="entry name" value="Pyridoxal_deC"/>
    <property type="match status" value="1"/>
</dbReference>
<dbReference type="SUPFAM" id="SSF53383">
    <property type="entry name" value="PLP-dependent transferases"/>
    <property type="match status" value="1"/>
</dbReference>
<dbReference type="PROSITE" id="PS00392">
    <property type="entry name" value="DDC_GAD_HDC_YDC"/>
    <property type="match status" value="1"/>
</dbReference>
<comment type="function">
    <text evidence="1">Catalyzes the decarboxylation of L-aspartate, 3-sulfino-L-alanine (cysteine sulfinic acid), and L-cysteate to beta-alanine, hypotaurine and taurine, respectively. The preferred substrate is L-aspartate. Does not exhibit any decarboxylation activity toward glutamate.</text>
</comment>
<comment type="catalytic activity">
    <reaction evidence="1">
        <text>L-aspartate + H(+) = beta-alanine + CO2</text>
        <dbReference type="Rhea" id="RHEA:19497"/>
        <dbReference type="ChEBI" id="CHEBI:15378"/>
        <dbReference type="ChEBI" id="CHEBI:16526"/>
        <dbReference type="ChEBI" id="CHEBI:29991"/>
        <dbReference type="ChEBI" id="CHEBI:57966"/>
        <dbReference type="EC" id="4.1.1.11"/>
    </reaction>
</comment>
<comment type="catalytic activity">
    <reaction evidence="1">
        <text>3-sulfino-L-alanine + H(+) = hypotaurine + CO2</text>
        <dbReference type="Rhea" id="RHEA:16877"/>
        <dbReference type="ChEBI" id="CHEBI:15378"/>
        <dbReference type="ChEBI" id="CHEBI:16526"/>
        <dbReference type="ChEBI" id="CHEBI:57853"/>
        <dbReference type="ChEBI" id="CHEBI:61085"/>
        <dbReference type="EC" id="4.1.1.29"/>
    </reaction>
</comment>
<comment type="cofactor">
    <cofactor evidence="1">
        <name>pyridoxal 5'-phosphate</name>
        <dbReference type="ChEBI" id="CHEBI:597326"/>
    </cofactor>
</comment>
<comment type="subunit">
    <text evidence="1">Homodimer.</text>
</comment>
<comment type="similarity">
    <text evidence="2">Belongs to the group II decarboxylase family.</text>
</comment>
<comment type="sequence caution" evidence="2">
    <conflict type="erroneous initiation">
        <sequence resource="EMBL-CDS" id="CAJ83832"/>
    </conflict>
</comment>
<sequence length="511" mass="58815">HDIDKNKQETRPMKRNAVLVDGVVLNGPIIDSSSGEKFVEDVYRILMNELVYKASDINQKVCEWQEPEQLKKLLDLNIKDNGEPHEKLLQLCKNVIKYSVKTSHPRFFNQLYAGMDHYSLAARFITEALNPSVYTYEVSPVFILTEEAILKKMIEFLGWKEGDGIFSPGGSVSNMYAVNLARYKYCPDIKQKGLSSAPRLVMFTSEECHYSMKKAAAFLGIGTENVYFVKTDDRGKMIPEELENQIQRAKKEGAVPFLVSATSGTTVLGAFDPLDDIANICEKHKLWFHVDASWGGSALMSQKYRKRLHGIHRADSVAWNPHKMLMAGIQCCALLVRDNSGLLKRCHSAEATYLFQQDKFYDVQYDTGDKSIQCSRRADAFKFWMMWKALGTTGLEERINRALALTRYLASEIKKRDGFELLWEPEYANTCFWYIPPSFRNMEKGPEYWRKFSNVAPTIKERMMKKGSMMVGYQPHRDKVNFFRHIVISPQVSREDMDFVLDEIERLGRDL</sequence>